<accession>A2XHZ9</accession>
<accession>Q6VSV0</accession>
<accession>Q6VSV1</accession>
<keyword id="KW-1003">Cell membrane</keyword>
<keyword id="KW-0325">Glycoprotein</keyword>
<keyword id="KW-0336">GPI-anchor</keyword>
<keyword id="KW-0449">Lipoprotein</keyword>
<keyword id="KW-0472">Membrane</keyword>
<keyword id="KW-1185">Reference proteome</keyword>
<keyword id="KW-0732">Signal</keyword>
<reference key="1">
    <citation type="journal article" date="2003" name="Plant Cell">
        <title>BRITTLE CULM1, which encodes a COBRA-like protein, affects the mechanical properties of rice plants.</title>
        <authorList>
            <person name="Li Y."/>
            <person name="Qian Q."/>
            <person name="Zhou Y."/>
            <person name="Yan M."/>
            <person name="Sun L."/>
            <person name="Zhang M."/>
            <person name="Fu Z."/>
            <person name="Wang Y."/>
            <person name="Han B."/>
            <person name="Pang X."/>
            <person name="Chen M."/>
            <person name="Li J."/>
        </authorList>
    </citation>
    <scope>NUCLEOTIDE SEQUENCE [GENOMIC DNA]</scope>
    <scope>FUNCTION</scope>
    <scope>TISSUE SPECIFICITY</scope>
    <source>
        <strain>cv. Shuangke Zao</strain>
    </source>
</reference>
<reference key="2">
    <citation type="journal article" date="2005" name="PLoS Biol.">
        <title>The genomes of Oryza sativa: a history of duplications.</title>
        <authorList>
            <person name="Yu J."/>
            <person name="Wang J."/>
            <person name="Lin W."/>
            <person name="Li S."/>
            <person name="Li H."/>
            <person name="Zhou J."/>
            <person name="Ni P."/>
            <person name="Dong W."/>
            <person name="Hu S."/>
            <person name="Zeng C."/>
            <person name="Zhang J."/>
            <person name="Zhang Y."/>
            <person name="Li R."/>
            <person name="Xu Z."/>
            <person name="Li S."/>
            <person name="Li X."/>
            <person name="Zheng H."/>
            <person name="Cong L."/>
            <person name="Lin L."/>
            <person name="Yin J."/>
            <person name="Geng J."/>
            <person name="Li G."/>
            <person name="Shi J."/>
            <person name="Liu J."/>
            <person name="Lv H."/>
            <person name="Li J."/>
            <person name="Wang J."/>
            <person name="Deng Y."/>
            <person name="Ran L."/>
            <person name="Shi X."/>
            <person name="Wang X."/>
            <person name="Wu Q."/>
            <person name="Li C."/>
            <person name="Ren X."/>
            <person name="Wang J."/>
            <person name="Wang X."/>
            <person name="Li D."/>
            <person name="Liu D."/>
            <person name="Zhang X."/>
            <person name="Ji Z."/>
            <person name="Zhao W."/>
            <person name="Sun Y."/>
            <person name="Zhang Z."/>
            <person name="Bao J."/>
            <person name="Han Y."/>
            <person name="Dong L."/>
            <person name="Ji J."/>
            <person name="Chen P."/>
            <person name="Wu S."/>
            <person name="Liu J."/>
            <person name="Xiao Y."/>
            <person name="Bu D."/>
            <person name="Tan J."/>
            <person name="Yang L."/>
            <person name="Ye C."/>
            <person name="Zhang J."/>
            <person name="Xu J."/>
            <person name="Zhou Y."/>
            <person name="Yu Y."/>
            <person name="Zhang B."/>
            <person name="Zhuang S."/>
            <person name="Wei H."/>
            <person name="Liu B."/>
            <person name="Lei M."/>
            <person name="Yu H."/>
            <person name="Li Y."/>
            <person name="Xu H."/>
            <person name="Wei S."/>
            <person name="He X."/>
            <person name="Fang L."/>
            <person name="Zhang Z."/>
            <person name="Zhang Y."/>
            <person name="Huang X."/>
            <person name="Su Z."/>
            <person name="Tong W."/>
            <person name="Li J."/>
            <person name="Tong Z."/>
            <person name="Li S."/>
            <person name="Ye J."/>
            <person name="Wang L."/>
            <person name="Fang L."/>
            <person name="Lei T."/>
            <person name="Chen C.-S."/>
            <person name="Chen H.-C."/>
            <person name="Xu Z."/>
            <person name="Li H."/>
            <person name="Huang H."/>
            <person name="Zhang F."/>
            <person name="Xu H."/>
            <person name="Li N."/>
            <person name="Zhao C."/>
            <person name="Li S."/>
            <person name="Dong L."/>
            <person name="Huang Y."/>
            <person name="Li L."/>
            <person name="Xi Y."/>
            <person name="Qi Q."/>
            <person name="Li W."/>
            <person name="Zhang B."/>
            <person name="Hu W."/>
            <person name="Zhang Y."/>
            <person name="Tian X."/>
            <person name="Jiao Y."/>
            <person name="Liang X."/>
            <person name="Jin J."/>
            <person name="Gao L."/>
            <person name="Zheng W."/>
            <person name="Hao B."/>
            <person name="Liu S.-M."/>
            <person name="Wang W."/>
            <person name="Yuan L."/>
            <person name="Cao M."/>
            <person name="McDermott J."/>
            <person name="Samudrala R."/>
            <person name="Wang J."/>
            <person name="Wong G.K.-S."/>
            <person name="Yang H."/>
        </authorList>
    </citation>
    <scope>NUCLEOTIDE SEQUENCE [LARGE SCALE GENOMIC DNA]</scope>
    <source>
        <strain>cv. 93-11</strain>
    </source>
</reference>
<evidence type="ECO:0000255" key="1"/>
<evidence type="ECO:0000256" key="2">
    <source>
        <dbReference type="SAM" id="MobiDB-lite"/>
    </source>
</evidence>
<evidence type="ECO:0000269" key="3">
    <source>
    </source>
</evidence>
<evidence type="ECO:0000305" key="4"/>
<proteinExistence type="evidence at transcript level"/>
<sequence>MELHRCSLLALLLAVTCSVAVAYDPLDPKGNITIKWDVISWTPDGYVAMVTMSNYQMYRQILAPGWTVGWSWAKKEVIWSIVGAQATEQGDCSKFKGGIPHSCKRTPAIVDLLPGVPYNQQIANCCKAGVVSAYGQDPAGSVSAFQVSVGLAGTTNKTVKLPTNFTLAGPGPGYTCGPATIVPSTVYLTPDRRRRTQALMTWTVTCTYSQQLASRYPTCCVSFSSFYNSTIVPCARCACGCGHDGYRGNGGGGKNARAGDGRSRRNSGGGGGHSGGTECIMGDSKRALSAGVNTPRKDGAPLLQCTSHMCPIRVHWHVKLNYKDYWRAKIAITNFNYRMNYTQWTLVAQHPNLNNVTEVFSFQYKPLLPYGNINDTGMFYGLKFYNDLLMEAGPFGNVQSEVLMRKDYNTFTFSQGWAFPRKIYFNGDECKMPPPDSYPYLPNSAPIGPPRSVAAAASAILVVLLLVA</sequence>
<feature type="signal peptide" evidence="1">
    <location>
        <begin position="1"/>
        <end position="22"/>
    </location>
</feature>
<feature type="chain" id="PRO_0000295007" description="COBRA-like protein 5">
    <location>
        <begin position="23"/>
        <end position="443"/>
    </location>
</feature>
<feature type="propeptide" id="PRO_0000295008" description="Removed in mature form" evidence="1">
    <location>
        <begin position="444"/>
        <end position="468"/>
    </location>
</feature>
<feature type="region of interest" description="Disordered" evidence="2">
    <location>
        <begin position="251"/>
        <end position="278"/>
    </location>
</feature>
<feature type="lipid moiety-binding region" description="GPI-anchor amidated asparagine" evidence="1">
    <location>
        <position position="443"/>
    </location>
</feature>
<feature type="glycosylation site" description="N-linked (GlcNAc...) asparagine" evidence="1">
    <location>
        <position position="31"/>
    </location>
</feature>
<feature type="glycosylation site" description="N-linked (GlcNAc...) asparagine" evidence="1">
    <location>
        <position position="156"/>
    </location>
</feature>
<feature type="glycosylation site" description="N-linked (GlcNAc...) asparagine" evidence="1">
    <location>
        <position position="164"/>
    </location>
</feature>
<feature type="glycosylation site" description="N-linked (GlcNAc...) asparagine" evidence="1">
    <location>
        <position position="228"/>
    </location>
</feature>
<feature type="glycosylation site" description="N-linked (GlcNAc...) asparagine" evidence="1">
    <location>
        <position position="340"/>
    </location>
</feature>
<feature type="glycosylation site" description="N-linked (GlcNAc...) asparagine" evidence="1">
    <location>
        <position position="355"/>
    </location>
</feature>
<feature type="glycosylation site" description="N-linked (GlcNAc...) asparagine" evidence="1">
    <location>
        <position position="374"/>
    </location>
</feature>
<organism>
    <name type="scientific">Oryza sativa subsp. indica</name>
    <name type="common">Rice</name>
    <dbReference type="NCBI Taxonomy" id="39946"/>
    <lineage>
        <taxon>Eukaryota</taxon>
        <taxon>Viridiplantae</taxon>
        <taxon>Streptophyta</taxon>
        <taxon>Embryophyta</taxon>
        <taxon>Tracheophyta</taxon>
        <taxon>Spermatophyta</taxon>
        <taxon>Magnoliopsida</taxon>
        <taxon>Liliopsida</taxon>
        <taxon>Poales</taxon>
        <taxon>Poaceae</taxon>
        <taxon>BOP clade</taxon>
        <taxon>Oryzoideae</taxon>
        <taxon>Oryzeae</taxon>
        <taxon>Oryzinae</taxon>
        <taxon>Oryza</taxon>
        <taxon>Oryza sativa</taxon>
    </lineage>
</organism>
<name>COBL5_ORYSI</name>
<dbReference type="EMBL" id="AY328910">
    <property type="protein sequence ID" value="AAQ56121.1"/>
    <property type="molecule type" value="Genomic_DNA"/>
</dbReference>
<dbReference type="EMBL" id="CM000128">
    <property type="protein sequence ID" value="EAY90459.1"/>
    <property type="molecule type" value="Genomic_DNA"/>
</dbReference>
<dbReference type="STRING" id="39946.A2XHZ9"/>
<dbReference type="GlyCosmos" id="A2XHZ9">
    <property type="glycosylation" value="7 sites, No reported glycans"/>
</dbReference>
<dbReference type="EnsemblPlants" id="BGIOSGA012871-TA">
    <property type="protein sequence ID" value="BGIOSGA012871-PA"/>
    <property type="gene ID" value="BGIOSGA012871"/>
</dbReference>
<dbReference type="EnsemblPlants" id="OsGoSa_03g0021610.01">
    <property type="protein sequence ID" value="OsGoSa_03g0021610.01"/>
    <property type="gene ID" value="OsGoSa_03g0021610"/>
</dbReference>
<dbReference type="EnsemblPlants" id="OsIR64_03g0021240.01">
    <property type="protein sequence ID" value="OsIR64_03g0021240.01"/>
    <property type="gene ID" value="OsIR64_03g0021240"/>
</dbReference>
<dbReference type="EnsemblPlants" id="OsKYG_03g0021530.01">
    <property type="protein sequence ID" value="OsKYG_03g0021530.01"/>
    <property type="gene ID" value="OsKYG_03g0021530"/>
</dbReference>
<dbReference type="EnsemblPlants" id="OsLima_03g0021520.01">
    <property type="protein sequence ID" value="OsLima_03g0021520.01"/>
    <property type="gene ID" value="OsLima_03g0021520"/>
</dbReference>
<dbReference type="EnsemblPlants" id="OsLiXu_03g0021480.01">
    <property type="protein sequence ID" value="OsLiXu_03g0021480.01"/>
    <property type="gene ID" value="OsLiXu_03g0021480"/>
</dbReference>
<dbReference type="EnsemblPlants" id="OsMH63_03G021520_01">
    <property type="protein sequence ID" value="OsMH63_03G021520_01"/>
    <property type="gene ID" value="OsMH63_03G021520"/>
</dbReference>
<dbReference type="EnsemblPlants" id="OsPr106_03g0021510.01">
    <property type="protein sequence ID" value="OsPr106_03g0021510.01"/>
    <property type="gene ID" value="OsPr106_03g0021510"/>
</dbReference>
<dbReference type="EnsemblPlants" id="OsZS97_03G021440_01">
    <property type="protein sequence ID" value="OsZS97_03G021440_01"/>
    <property type="gene ID" value="OsZS97_03G021440"/>
</dbReference>
<dbReference type="Gramene" id="BGIOSGA012871-TA">
    <property type="protein sequence ID" value="BGIOSGA012871-PA"/>
    <property type="gene ID" value="BGIOSGA012871"/>
</dbReference>
<dbReference type="Gramene" id="OsGoSa_03g0021610.01">
    <property type="protein sequence ID" value="OsGoSa_03g0021610.01"/>
    <property type="gene ID" value="OsGoSa_03g0021610"/>
</dbReference>
<dbReference type="Gramene" id="OsIR64_03g0021240.01">
    <property type="protein sequence ID" value="OsIR64_03g0021240.01"/>
    <property type="gene ID" value="OsIR64_03g0021240"/>
</dbReference>
<dbReference type="Gramene" id="OsKYG_03g0021530.01">
    <property type="protein sequence ID" value="OsKYG_03g0021530.01"/>
    <property type="gene ID" value="OsKYG_03g0021530"/>
</dbReference>
<dbReference type="Gramene" id="OsLima_03g0021520.01">
    <property type="protein sequence ID" value="OsLima_03g0021520.01"/>
    <property type="gene ID" value="OsLima_03g0021520"/>
</dbReference>
<dbReference type="Gramene" id="OsLiXu_03g0021480.01">
    <property type="protein sequence ID" value="OsLiXu_03g0021480.01"/>
    <property type="gene ID" value="OsLiXu_03g0021480"/>
</dbReference>
<dbReference type="Gramene" id="OsMH63_03G021520_01">
    <property type="protein sequence ID" value="OsMH63_03G021520_01"/>
    <property type="gene ID" value="OsMH63_03G021520"/>
</dbReference>
<dbReference type="Gramene" id="OsPr106_03g0021510.01">
    <property type="protein sequence ID" value="OsPr106_03g0021510.01"/>
    <property type="gene ID" value="OsPr106_03g0021510"/>
</dbReference>
<dbReference type="Gramene" id="OsZS97_03G021440_01">
    <property type="protein sequence ID" value="OsZS97_03G021440_01"/>
    <property type="gene ID" value="OsZS97_03G021440"/>
</dbReference>
<dbReference type="HOGENOM" id="CLU_038120_0_0_1"/>
<dbReference type="OMA" id="HRAGINT"/>
<dbReference type="OrthoDB" id="2012261at2759"/>
<dbReference type="Proteomes" id="UP000007015">
    <property type="component" value="Chromosome 3"/>
</dbReference>
<dbReference type="GO" id="GO:0005886">
    <property type="term" value="C:plasma membrane"/>
    <property type="evidence" value="ECO:0007669"/>
    <property type="project" value="UniProtKB-SubCell"/>
</dbReference>
<dbReference type="GO" id="GO:0098552">
    <property type="term" value="C:side of membrane"/>
    <property type="evidence" value="ECO:0007669"/>
    <property type="project" value="UniProtKB-KW"/>
</dbReference>
<dbReference type="GO" id="GO:0010215">
    <property type="term" value="P:cellulose microfibril organization"/>
    <property type="evidence" value="ECO:0007669"/>
    <property type="project" value="InterPro"/>
</dbReference>
<dbReference type="GO" id="GO:0052324">
    <property type="term" value="P:plant-type cell wall cellulose biosynthetic process"/>
    <property type="evidence" value="ECO:0007669"/>
    <property type="project" value="TreeGrafter"/>
</dbReference>
<dbReference type="InterPro" id="IPR056900">
    <property type="entry name" value="COB_C"/>
</dbReference>
<dbReference type="InterPro" id="IPR006918">
    <property type="entry name" value="COBRA_pln"/>
</dbReference>
<dbReference type="PANTHER" id="PTHR31673:SF55">
    <property type="entry name" value="COBRA-LIKE PROTEIN 5"/>
    <property type="match status" value="1"/>
</dbReference>
<dbReference type="PANTHER" id="PTHR31673">
    <property type="entry name" value="PROTEIN COBRA"/>
    <property type="match status" value="1"/>
</dbReference>
<dbReference type="Pfam" id="PF25079">
    <property type="entry name" value="COB_C"/>
    <property type="match status" value="2"/>
</dbReference>
<dbReference type="Pfam" id="PF04833">
    <property type="entry name" value="COBRA"/>
    <property type="match status" value="1"/>
</dbReference>
<dbReference type="PIRSF" id="PIRSF038122">
    <property type="entry name" value="COBRA"/>
    <property type="match status" value="1"/>
</dbReference>
<protein>
    <recommendedName>
        <fullName>COBRA-like protein 5</fullName>
    </recommendedName>
    <alternativeName>
        <fullName>Protein BRITTLE CULM1</fullName>
    </alternativeName>
</protein>
<gene>
    <name type="primary">BC1</name>
    <name type="ORF">OsI_011692</name>
</gene>
<comment type="function">
    <text evidence="3">Involved in determining the orientation of cell expansion, probably by playing an important role in cellulose deposition. May act by recruiting cellulose synthesizing complexes to discrete positions on the cell surface.</text>
</comment>
<comment type="subcellular location">
    <subcellularLocation>
        <location evidence="4">Cell membrane</location>
        <topology evidence="4">Lipid-anchor</topology>
        <topology evidence="4">GPI-anchor</topology>
    </subcellularLocation>
</comment>
<comment type="tissue specificity">
    <text evidence="3">Expressed mainly in developing sclerenchyma cells and in vascular bundles.</text>
</comment>
<comment type="similarity">
    <text evidence="4">Belongs to the COBRA family.</text>
</comment>